<proteinExistence type="inferred from homology"/>
<sequence length="208" mass="22051">MIGMLTGRVESVETDTALIDVGGVGYETRMPATDLGRLHAGQDACVFTYLNLSQDSVTLYGFLDRDSKRVFLQLIKVSGIGPKVAQSLLGTMTPSQLARAIADNDAAALAKAPGLGRKGAQKIILELKGSVDLNQSDDASAGNAPYQPTVDAGVEQVVEGLVSLGWRQQDAQRAVNEACAENDVPMPLASDDAPRVLRLALARMDRGR</sequence>
<comment type="function">
    <text evidence="1">The RuvA-RuvB-RuvC complex processes Holliday junction (HJ) DNA during genetic recombination and DNA repair, while the RuvA-RuvB complex plays an important role in the rescue of blocked DNA replication forks via replication fork reversal (RFR). RuvA specifically binds to HJ cruciform DNA, conferring on it an open structure. The RuvB hexamer acts as an ATP-dependent pump, pulling dsDNA into and through the RuvAB complex. HJ branch migration allows RuvC to scan DNA until it finds its consensus sequence, where it cleaves and resolves the cruciform DNA.</text>
</comment>
<comment type="subunit">
    <text evidence="1">Homotetramer. Forms an RuvA(8)-RuvB(12)-Holliday junction (HJ) complex. HJ DNA is sandwiched between 2 RuvA tetramers; dsDNA enters through RuvA and exits via RuvB. An RuvB hexamer assembles on each DNA strand where it exits the tetramer. Each RuvB hexamer is contacted by two RuvA subunits (via domain III) on 2 adjacent RuvB subunits; this complex drives branch migration. In the full resolvosome a probable DNA-RuvA(4)-RuvB(12)-RuvC(2) complex forms which resolves the HJ.</text>
</comment>
<comment type="subcellular location">
    <subcellularLocation>
        <location evidence="1">Cytoplasm</location>
    </subcellularLocation>
</comment>
<comment type="domain">
    <text evidence="1">Has three domains with a flexible linker between the domains II and III and assumes an 'L' shape. Domain III is highly mobile and contacts RuvB.</text>
</comment>
<comment type="similarity">
    <text evidence="1">Belongs to the RuvA family.</text>
</comment>
<keyword id="KW-0963">Cytoplasm</keyword>
<keyword id="KW-0227">DNA damage</keyword>
<keyword id="KW-0233">DNA recombination</keyword>
<keyword id="KW-0234">DNA repair</keyword>
<keyword id="KW-0238">DNA-binding</keyword>
<gene>
    <name evidence="1" type="primary">ruvA</name>
    <name type="ordered locus">Blon_1157</name>
    <name type="ordered locus">BLIJ_1184</name>
</gene>
<protein>
    <recommendedName>
        <fullName evidence="1">Holliday junction branch migration complex subunit RuvA</fullName>
    </recommendedName>
</protein>
<name>RUVA_BIFLS</name>
<organism>
    <name type="scientific">Bifidobacterium longum subsp. infantis (strain ATCC 15697 / DSM 20088 / JCM 1222 / NCTC 11817 / S12)</name>
    <dbReference type="NCBI Taxonomy" id="391904"/>
    <lineage>
        <taxon>Bacteria</taxon>
        <taxon>Bacillati</taxon>
        <taxon>Actinomycetota</taxon>
        <taxon>Actinomycetes</taxon>
        <taxon>Bifidobacteriales</taxon>
        <taxon>Bifidobacteriaceae</taxon>
        <taxon>Bifidobacterium</taxon>
    </lineage>
</organism>
<accession>B7GR17</accession>
<accession>E8MJP5</accession>
<reference key="1">
    <citation type="journal article" date="2008" name="Proc. Natl. Acad. Sci. U.S.A.">
        <title>The genome sequence of Bifidobacterium longum subsp. infantis reveals adaptations for milk utilization within the infant microbiome.</title>
        <authorList>
            <person name="Sela D.A."/>
            <person name="Chapman J."/>
            <person name="Adeuya A."/>
            <person name="Kim J.H."/>
            <person name="Chen F."/>
            <person name="Whitehead T.R."/>
            <person name="Lapidus A."/>
            <person name="Rokhsar D.S."/>
            <person name="Lebrilla C.B."/>
            <person name="German J.B."/>
            <person name="Price N.P."/>
            <person name="Richardson P.M."/>
            <person name="Mills D.A."/>
        </authorList>
    </citation>
    <scope>NUCLEOTIDE SEQUENCE [LARGE SCALE GENOMIC DNA]</scope>
    <source>
        <strain>ATCC 15697 / DSM 20088 / JCM 1222 / NCTC 11817 / S12</strain>
    </source>
</reference>
<reference key="2">
    <citation type="journal article" date="2011" name="Nature">
        <title>Bifidobacteria can protect from enteropathogenic infection through production of acetate.</title>
        <authorList>
            <person name="Fukuda S."/>
            <person name="Toh H."/>
            <person name="Hase K."/>
            <person name="Oshima K."/>
            <person name="Nakanishi Y."/>
            <person name="Yoshimura K."/>
            <person name="Tobe T."/>
            <person name="Clarke J.M."/>
            <person name="Topping D.L."/>
            <person name="Suzuki T."/>
            <person name="Taylor T.D."/>
            <person name="Itoh K."/>
            <person name="Kikuchi J."/>
            <person name="Morita H."/>
            <person name="Hattori M."/>
            <person name="Ohno H."/>
        </authorList>
    </citation>
    <scope>NUCLEOTIDE SEQUENCE [LARGE SCALE GENOMIC DNA]</scope>
    <source>
        <strain>ATCC 15697 / DSM 20088 / JCM 1222 / NCTC 11817 / S12</strain>
    </source>
</reference>
<evidence type="ECO:0000255" key="1">
    <source>
        <dbReference type="HAMAP-Rule" id="MF_00031"/>
    </source>
</evidence>
<feature type="chain" id="PRO_1000195120" description="Holliday junction branch migration complex subunit RuvA">
    <location>
        <begin position="1"/>
        <end position="208"/>
    </location>
</feature>
<feature type="region of interest" description="Domain I" evidence="1">
    <location>
        <begin position="1"/>
        <end position="63"/>
    </location>
</feature>
<feature type="region of interest" description="Domain II" evidence="1">
    <location>
        <begin position="64"/>
        <end position="142"/>
    </location>
</feature>
<feature type="region of interest" description="Flexible linker" evidence="1">
    <location>
        <begin position="143"/>
        <end position="151"/>
    </location>
</feature>
<feature type="region of interest" description="Domain III" evidence="1">
    <location>
        <begin position="151"/>
        <end position="208"/>
    </location>
</feature>
<dbReference type="EMBL" id="CP001095">
    <property type="protein sequence ID" value="ACJ52247.1"/>
    <property type="molecule type" value="Genomic_DNA"/>
</dbReference>
<dbReference type="EMBL" id="AP010889">
    <property type="protein sequence ID" value="BAJ68772.1"/>
    <property type="molecule type" value="Genomic_DNA"/>
</dbReference>
<dbReference type="RefSeq" id="WP_012577504.1">
    <property type="nucleotide sequence ID" value="NC_011593.1"/>
</dbReference>
<dbReference type="SMR" id="B7GR17"/>
<dbReference type="KEGG" id="bln:Blon_1157"/>
<dbReference type="KEGG" id="blon:BLIJ_1184"/>
<dbReference type="PATRIC" id="fig|391904.8.peg.1181"/>
<dbReference type="HOGENOM" id="CLU_087936_2_1_11"/>
<dbReference type="Proteomes" id="UP000001360">
    <property type="component" value="Chromosome"/>
</dbReference>
<dbReference type="GO" id="GO:0005737">
    <property type="term" value="C:cytoplasm"/>
    <property type="evidence" value="ECO:0007669"/>
    <property type="project" value="UniProtKB-SubCell"/>
</dbReference>
<dbReference type="GO" id="GO:0009379">
    <property type="term" value="C:Holliday junction helicase complex"/>
    <property type="evidence" value="ECO:0007669"/>
    <property type="project" value="InterPro"/>
</dbReference>
<dbReference type="GO" id="GO:0048476">
    <property type="term" value="C:Holliday junction resolvase complex"/>
    <property type="evidence" value="ECO:0007669"/>
    <property type="project" value="UniProtKB-UniRule"/>
</dbReference>
<dbReference type="GO" id="GO:0005524">
    <property type="term" value="F:ATP binding"/>
    <property type="evidence" value="ECO:0007669"/>
    <property type="project" value="InterPro"/>
</dbReference>
<dbReference type="GO" id="GO:0000400">
    <property type="term" value="F:four-way junction DNA binding"/>
    <property type="evidence" value="ECO:0007669"/>
    <property type="project" value="UniProtKB-UniRule"/>
</dbReference>
<dbReference type="GO" id="GO:0009378">
    <property type="term" value="F:four-way junction helicase activity"/>
    <property type="evidence" value="ECO:0007669"/>
    <property type="project" value="InterPro"/>
</dbReference>
<dbReference type="GO" id="GO:0006310">
    <property type="term" value="P:DNA recombination"/>
    <property type="evidence" value="ECO:0007669"/>
    <property type="project" value="UniProtKB-UniRule"/>
</dbReference>
<dbReference type="GO" id="GO:0006281">
    <property type="term" value="P:DNA repair"/>
    <property type="evidence" value="ECO:0007669"/>
    <property type="project" value="UniProtKB-UniRule"/>
</dbReference>
<dbReference type="CDD" id="cd14332">
    <property type="entry name" value="UBA_RuvA_C"/>
    <property type="match status" value="1"/>
</dbReference>
<dbReference type="Gene3D" id="1.10.150.20">
    <property type="entry name" value="5' to 3' exonuclease, C-terminal subdomain"/>
    <property type="match status" value="1"/>
</dbReference>
<dbReference type="Gene3D" id="1.10.8.10">
    <property type="entry name" value="DNA helicase RuvA subunit, C-terminal domain"/>
    <property type="match status" value="1"/>
</dbReference>
<dbReference type="Gene3D" id="2.40.50.140">
    <property type="entry name" value="Nucleic acid-binding proteins"/>
    <property type="match status" value="1"/>
</dbReference>
<dbReference type="HAMAP" id="MF_00031">
    <property type="entry name" value="DNA_HJ_migration_RuvA"/>
    <property type="match status" value="1"/>
</dbReference>
<dbReference type="InterPro" id="IPR013849">
    <property type="entry name" value="DNA_helicase_Holl-junc_RuvA_I"/>
</dbReference>
<dbReference type="InterPro" id="IPR003583">
    <property type="entry name" value="Hlx-hairpin-Hlx_DNA-bd_motif"/>
</dbReference>
<dbReference type="InterPro" id="IPR012340">
    <property type="entry name" value="NA-bd_OB-fold"/>
</dbReference>
<dbReference type="InterPro" id="IPR000085">
    <property type="entry name" value="RuvA"/>
</dbReference>
<dbReference type="InterPro" id="IPR010994">
    <property type="entry name" value="RuvA_2-like"/>
</dbReference>
<dbReference type="InterPro" id="IPR011114">
    <property type="entry name" value="RuvA_C"/>
</dbReference>
<dbReference type="InterPro" id="IPR036267">
    <property type="entry name" value="RuvA_C_sf"/>
</dbReference>
<dbReference type="NCBIfam" id="TIGR00084">
    <property type="entry name" value="ruvA"/>
    <property type="match status" value="1"/>
</dbReference>
<dbReference type="Pfam" id="PF14520">
    <property type="entry name" value="HHH_5"/>
    <property type="match status" value="1"/>
</dbReference>
<dbReference type="Pfam" id="PF07499">
    <property type="entry name" value="RuvA_C"/>
    <property type="match status" value="1"/>
</dbReference>
<dbReference type="Pfam" id="PF01330">
    <property type="entry name" value="RuvA_N"/>
    <property type="match status" value="1"/>
</dbReference>
<dbReference type="SMART" id="SM00278">
    <property type="entry name" value="HhH1"/>
    <property type="match status" value="2"/>
</dbReference>
<dbReference type="SUPFAM" id="SSF46929">
    <property type="entry name" value="DNA helicase RuvA subunit, C-terminal domain"/>
    <property type="match status" value="1"/>
</dbReference>
<dbReference type="SUPFAM" id="SSF50249">
    <property type="entry name" value="Nucleic acid-binding proteins"/>
    <property type="match status" value="1"/>
</dbReference>
<dbReference type="SUPFAM" id="SSF47781">
    <property type="entry name" value="RuvA domain 2-like"/>
    <property type="match status" value="1"/>
</dbReference>